<dbReference type="EC" id="2.7.7.60" evidence="1"/>
<dbReference type="EMBL" id="CP001127">
    <property type="protein sequence ID" value="ACF92803.1"/>
    <property type="molecule type" value="Genomic_DNA"/>
</dbReference>
<dbReference type="RefSeq" id="WP_000741649.1">
    <property type="nucleotide sequence ID" value="NC_011094.1"/>
</dbReference>
<dbReference type="SMR" id="B4TTW1"/>
<dbReference type="KEGG" id="sew:SeSA_A3081"/>
<dbReference type="HOGENOM" id="CLU_061281_3_1_6"/>
<dbReference type="UniPathway" id="UPA00056">
    <property type="reaction ID" value="UER00093"/>
</dbReference>
<dbReference type="Proteomes" id="UP000001865">
    <property type="component" value="Chromosome"/>
</dbReference>
<dbReference type="GO" id="GO:0050518">
    <property type="term" value="F:2-C-methyl-D-erythritol 4-phosphate cytidylyltransferase activity"/>
    <property type="evidence" value="ECO:0007669"/>
    <property type="project" value="UniProtKB-UniRule"/>
</dbReference>
<dbReference type="GO" id="GO:0019288">
    <property type="term" value="P:isopentenyl diphosphate biosynthetic process, methylerythritol 4-phosphate pathway"/>
    <property type="evidence" value="ECO:0007669"/>
    <property type="project" value="UniProtKB-UniRule"/>
</dbReference>
<dbReference type="CDD" id="cd02516">
    <property type="entry name" value="CDP-ME_synthetase"/>
    <property type="match status" value="1"/>
</dbReference>
<dbReference type="FunFam" id="3.90.550.10:FF:000003">
    <property type="entry name" value="2-C-methyl-D-erythritol 4-phosphate cytidylyltransferase"/>
    <property type="match status" value="1"/>
</dbReference>
<dbReference type="Gene3D" id="3.90.550.10">
    <property type="entry name" value="Spore Coat Polysaccharide Biosynthesis Protein SpsA, Chain A"/>
    <property type="match status" value="1"/>
</dbReference>
<dbReference type="HAMAP" id="MF_00108">
    <property type="entry name" value="IspD"/>
    <property type="match status" value="1"/>
</dbReference>
<dbReference type="InterPro" id="IPR001228">
    <property type="entry name" value="IspD"/>
</dbReference>
<dbReference type="InterPro" id="IPR034683">
    <property type="entry name" value="IspD/TarI"/>
</dbReference>
<dbReference type="InterPro" id="IPR050088">
    <property type="entry name" value="IspD/TarI_cytidylyltransf_bact"/>
</dbReference>
<dbReference type="InterPro" id="IPR018294">
    <property type="entry name" value="ISPD_synthase_CS"/>
</dbReference>
<dbReference type="InterPro" id="IPR029044">
    <property type="entry name" value="Nucleotide-diphossugar_trans"/>
</dbReference>
<dbReference type="NCBIfam" id="TIGR00453">
    <property type="entry name" value="ispD"/>
    <property type="match status" value="1"/>
</dbReference>
<dbReference type="PANTHER" id="PTHR32125">
    <property type="entry name" value="2-C-METHYL-D-ERYTHRITOL 4-PHOSPHATE CYTIDYLYLTRANSFERASE, CHLOROPLASTIC"/>
    <property type="match status" value="1"/>
</dbReference>
<dbReference type="PANTHER" id="PTHR32125:SF4">
    <property type="entry name" value="2-C-METHYL-D-ERYTHRITOL 4-PHOSPHATE CYTIDYLYLTRANSFERASE, CHLOROPLASTIC"/>
    <property type="match status" value="1"/>
</dbReference>
<dbReference type="Pfam" id="PF01128">
    <property type="entry name" value="IspD"/>
    <property type="match status" value="1"/>
</dbReference>
<dbReference type="SUPFAM" id="SSF53448">
    <property type="entry name" value="Nucleotide-diphospho-sugar transferases"/>
    <property type="match status" value="1"/>
</dbReference>
<dbReference type="PROSITE" id="PS01295">
    <property type="entry name" value="ISPD"/>
    <property type="match status" value="1"/>
</dbReference>
<accession>B4TTW1</accession>
<sequence length="236" mass="25729">MAATLLDVCAVVPAAGFGRRMQTECPKQYLSIGNKTILEHSVHALLAHPRVTRVVIAISPGDHRFAQLPLANHPQITVVDGGNERADSVLAGLQAVAKAQWVLVHDAARPCLHQDDLARLLAISENSRVGGILASPVRDTMKRGEPGKNAIAHTVERADLWHALTPQFFPRELLHDCLTRALNEGATITDEASALEYCGFHPALVEGRADNIKVTRPEDLALAEFYLTRTIHQEKA</sequence>
<name>ISPD_SALSV</name>
<protein>
    <recommendedName>
        <fullName evidence="1">2-C-methyl-D-erythritol 4-phosphate cytidylyltransferase</fullName>
        <ecNumber evidence="1">2.7.7.60</ecNumber>
    </recommendedName>
    <alternativeName>
        <fullName evidence="1">4-diphosphocytidyl-2C-methyl-D-erythritol synthase</fullName>
    </alternativeName>
    <alternativeName>
        <fullName evidence="1">MEP cytidylyltransferase</fullName>
        <shortName evidence="1">MCT</shortName>
    </alternativeName>
</protein>
<feature type="chain" id="PRO_1000094349" description="2-C-methyl-D-erythritol 4-phosphate cytidylyltransferase">
    <location>
        <begin position="1"/>
        <end position="236"/>
    </location>
</feature>
<feature type="site" description="Transition state stabilizer" evidence="1">
    <location>
        <position position="20"/>
    </location>
</feature>
<feature type="site" description="Transition state stabilizer" evidence="1">
    <location>
        <position position="27"/>
    </location>
</feature>
<feature type="site" description="Positions MEP for the nucleophilic attack" evidence="1">
    <location>
        <position position="157"/>
    </location>
</feature>
<feature type="site" description="Positions MEP for the nucleophilic attack" evidence="1">
    <location>
        <position position="213"/>
    </location>
</feature>
<proteinExistence type="inferred from homology"/>
<keyword id="KW-0414">Isoprene biosynthesis</keyword>
<keyword id="KW-0548">Nucleotidyltransferase</keyword>
<keyword id="KW-0808">Transferase</keyword>
<gene>
    <name evidence="1" type="primary">ispD</name>
    <name type="ordered locus">SeSA_A3081</name>
</gene>
<evidence type="ECO:0000255" key="1">
    <source>
        <dbReference type="HAMAP-Rule" id="MF_00108"/>
    </source>
</evidence>
<organism>
    <name type="scientific">Salmonella schwarzengrund (strain CVM19633)</name>
    <dbReference type="NCBI Taxonomy" id="439843"/>
    <lineage>
        <taxon>Bacteria</taxon>
        <taxon>Pseudomonadati</taxon>
        <taxon>Pseudomonadota</taxon>
        <taxon>Gammaproteobacteria</taxon>
        <taxon>Enterobacterales</taxon>
        <taxon>Enterobacteriaceae</taxon>
        <taxon>Salmonella</taxon>
    </lineage>
</organism>
<comment type="function">
    <text evidence="1">Catalyzes the formation of 4-diphosphocytidyl-2-C-methyl-D-erythritol from CTP and 2-C-methyl-D-erythritol 4-phosphate (MEP).</text>
</comment>
<comment type="catalytic activity">
    <reaction evidence="1">
        <text>2-C-methyl-D-erythritol 4-phosphate + CTP + H(+) = 4-CDP-2-C-methyl-D-erythritol + diphosphate</text>
        <dbReference type="Rhea" id="RHEA:13429"/>
        <dbReference type="ChEBI" id="CHEBI:15378"/>
        <dbReference type="ChEBI" id="CHEBI:33019"/>
        <dbReference type="ChEBI" id="CHEBI:37563"/>
        <dbReference type="ChEBI" id="CHEBI:57823"/>
        <dbReference type="ChEBI" id="CHEBI:58262"/>
        <dbReference type="EC" id="2.7.7.60"/>
    </reaction>
</comment>
<comment type="pathway">
    <text evidence="1">Isoprenoid biosynthesis; isopentenyl diphosphate biosynthesis via DXP pathway; isopentenyl diphosphate from 1-deoxy-D-xylulose 5-phosphate: step 2/6.</text>
</comment>
<comment type="subunit">
    <text evidence="1">Homodimer.</text>
</comment>
<comment type="similarity">
    <text evidence="1">Belongs to the IspD/TarI cytidylyltransferase family. IspD subfamily.</text>
</comment>
<reference key="1">
    <citation type="journal article" date="2011" name="J. Bacteriol.">
        <title>Comparative genomics of 28 Salmonella enterica isolates: evidence for CRISPR-mediated adaptive sublineage evolution.</title>
        <authorList>
            <person name="Fricke W.F."/>
            <person name="Mammel M.K."/>
            <person name="McDermott P.F."/>
            <person name="Tartera C."/>
            <person name="White D.G."/>
            <person name="Leclerc J.E."/>
            <person name="Ravel J."/>
            <person name="Cebula T.A."/>
        </authorList>
    </citation>
    <scope>NUCLEOTIDE SEQUENCE [LARGE SCALE GENOMIC DNA]</scope>
    <source>
        <strain>CVM19633</strain>
    </source>
</reference>